<evidence type="ECO:0000255" key="1">
    <source>
        <dbReference type="HAMAP-Rule" id="MF_00447"/>
    </source>
</evidence>
<organism>
    <name type="scientific">Microcystis aeruginosa (strain NIES-843 / IAM M-2473)</name>
    <dbReference type="NCBI Taxonomy" id="449447"/>
    <lineage>
        <taxon>Bacteria</taxon>
        <taxon>Bacillati</taxon>
        <taxon>Cyanobacteriota</taxon>
        <taxon>Cyanophyceae</taxon>
        <taxon>Oscillatoriophycideae</taxon>
        <taxon>Chroococcales</taxon>
        <taxon>Microcystaceae</taxon>
        <taxon>Microcystis</taxon>
    </lineage>
</organism>
<feature type="chain" id="PRO_1000080950" description="Photosystem I reaction center subunit XI">
    <location>
        <begin position="1"/>
        <end position="160"/>
    </location>
</feature>
<feature type="transmembrane region" description="Helical" evidence="1">
    <location>
        <begin position="84"/>
        <end position="104"/>
    </location>
</feature>
<feature type="transmembrane region" description="Helical" evidence="1">
    <location>
        <begin position="125"/>
        <end position="145"/>
    </location>
</feature>
<reference key="1">
    <citation type="journal article" date="2007" name="DNA Res.">
        <title>Complete genomic structure of the bloom-forming toxic cyanobacterium Microcystis aeruginosa NIES-843.</title>
        <authorList>
            <person name="Kaneko T."/>
            <person name="Nakajima N."/>
            <person name="Okamoto S."/>
            <person name="Suzuki I."/>
            <person name="Tanabe Y."/>
            <person name="Tamaoki M."/>
            <person name="Nakamura Y."/>
            <person name="Kasai F."/>
            <person name="Watanabe A."/>
            <person name="Kawashima K."/>
            <person name="Kishida Y."/>
            <person name="Ono A."/>
            <person name="Shimizu Y."/>
            <person name="Takahashi C."/>
            <person name="Minami C."/>
            <person name="Fujishiro T."/>
            <person name="Kohara M."/>
            <person name="Katoh M."/>
            <person name="Nakazaki N."/>
            <person name="Nakayama S."/>
            <person name="Yamada M."/>
            <person name="Tabata S."/>
            <person name="Watanabe M.M."/>
        </authorList>
    </citation>
    <scope>NUCLEOTIDE SEQUENCE [LARGE SCALE GENOMIC DNA]</scope>
    <source>
        <strain>NIES-843 / IAM M-247</strain>
    </source>
</reference>
<comment type="subcellular location">
    <subcellularLocation>
        <location evidence="1">Cellular thylakoid membrane</location>
        <topology evidence="1">Multi-pass membrane protein</topology>
    </subcellularLocation>
</comment>
<comment type="similarity">
    <text evidence="1">Belongs to the PsaL family.</text>
</comment>
<name>PSAL_MICAN</name>
<gene>
    <name evidence="1" type="primary">psaL</name>
    <name type="ordered locus">MAE_43690</name>
</gene>
<accession>B0JT88</accession>
<keyword id="KW-0472">Membrane</keyword>
<keyword id="KW-0602">Photosynthesis</keyword>
<keyword id="KW-0603">Photosystem I</keyword>
<keyword id="KW-0793">Thylakoid</keyword>
<keyword id="KW-0812">Transmembrane</keyword>
<keyword id="KW-1133">Transmembrane helix</keyword>
<protein>
    <recommendedName>
        <fullName evidence="1">Photosystem I reaction center subunit XI</fullName>
    </recommendedName>
    <alternativeName>
        <fullName evidence="1">PSI subunit V</fullName>
    </alternativeName>
    <alternativeName>
        <fullName evidence="1">PSI-L</fullName>
    </alternativeName>
</protein>
<dbReference type="EMBL" id="AP009552">
    <property type="protein sequence ID" value="BAG04191.1"/>
    <property type="molecule type" value="Genomic_DNA"/>
</dbReference>
<dbReference type="RefSeq" id="WP_012267003.1">
    <property type="nucleotide sequence ID" value="NC_010296.1"/>
</dbReference>
<dbReference type="SMR" id="B0JT88"/>
<dbReference type="STRING" id="449447.MAE_43690"/>
<dbReference type="PaxDb" id="449447-MAE_43690"/>
<dbReference type="EnsemblBacteria" id="BAG04191">
    <property type="protein sequence ID" value="BAG04191"/>
    <property type="gene ID" value="MAE_43690"/>
</dbReference>
<dbReference type="KEGG" id="mar:MAE_43690"/>
<dbReference type="PATRIC" id="fig|449447.4.peg.3966"/>
<dbReference type="eggNOG" id="ENOG502ZMJ2">
    <property type="taxonomic scope" value="Bacteria"/>
</dbReference>
<dbReference type="HOGENOM" id="CLU_092204_1_0_3"/>
<dbReference type="BioCyc" id="MAER449447:MAE_RS18960-MONOMER"/>
<dbReference type="Proteomes" id="UP000001510">
    <property type="component" value="Chromosome"/>
</dbReference>
<dbReference type="GO" id="GO:0009538">
    <property type="term" value="C:photosystem I reaction center"/>
    <property type="evidence" value="ECO:0007669"/>
    <property type="project" value="InterPro"/>
</dbReference>
<dbReference type="GO" id="GO:0031676">
    <property type="term" value="C:plasma membrane-derived thylakoid membrane"/>
    <property type="evidence" value="ECO:0007669"/>
    <property type="project" value="UniProtKB-SubCell"/>
</dbReference>
<dbReference type="GO" id="GO:0015979">
    <property type="term" value="P:photosynthesis"/>
    <property type="evidence" value="ECO:0007669"/>
    <property type="project" value="UniProtKB-UniRule"/>
</dbReference>
<dbReference type="Gene3D" id="1.20.1240.10">
    <property type="entry name" value="Photosystem I PsaL, reaction centre subunit XI"/>
    <property type="match status" value="1"/>
</dbReference>
<dbReference type="HAMAP" id="MF_00447">
    <property type="entry name" value="PSI_PsaL"/>
    <property type="match status" value="1"/>
</dbReference>
<dbReference type="InterPro" id="IPR003757">
    <property type="entry name" value="PSI_PsaL"/>
</dbReference>
<dbReference type="InterPro" id="IPR036592">
    <property type="entry name" value="PSI_PsaL_sf"/>
</dbReference>
<dbReference type="InterPro" id="IPR022980">
    <property type="entry name" value="PSI_suXI"/>
</dbReference>
<dbReference type="NCBIfam" id="NF001926">
    <property type="entry name" value="PRK00704.1-3"/>
    <property type="match status" value="1"/>
</dbReference>
<dbReference type="PANTHER" id="PTHR34803">
    <property type="entry name" value="PHOTOSYSTEM I REACTION CENTER SUBUNIT XI, CHLOROPLASTIC"/>
    <property type="match status" value="1"/>
</dbReference>
<dbReference type="PANTHER" id="PTHR34803:SF2">
    <property type="entry name" value="PHOTOSYSTEM I REACTION CENTER SUBUNIT XI, CHLOROPLASTIC"/>
    <property type="match status" value="1"/>
</dbReference>
<dbReference type="Pfam" id="PF02605">
    <property type="entry name" value="PsaL"/>
    <property type="match status" value="1"/>
</dbReference>
<dbReference type="SUPFAM" id="SSF81568">
    <property type="entry name" value="Photosystem I reaction center subunit XI, PsaL"/>
    <property type="match status" value="1"/>
</dbReference>
<sequence>MAETGYKQVVTPYNDDPFIGHLATPISASGFTKAFIGNLPAYRPGLAPILRGLEVGMAHGYFLGGPWVVLGPLRDSEYANIGGLIPALAMVLLATGCLASYGLVSFQGKAASNDPLKSAEGWSQFAAGFFIGGMGGAFVAYFLLENLGVVDGIMRGVFNQ</sequence>
<proteinExistence type="inferred from homology"/>